<comment type="function">
    <text evidence="1">This protein specifically catalyzes the removal of signal peptides from prolipoproteins.</text>
</comment>
<comment type="catalytic activity">
    <reaction evidence="1">
        <text>Release of signal peptides from bacterial membrane prolipoproteins. Hydrolyzes -Xaa-Yaa-Zaa-|-(S,diacylglyceryl)Cys-, in which Xaa is hydrophobic (preferably Leu), and Yaa (Ala or Ser) and Zaa (Gly or Ala) have small, neutral side chains.</text>
        <dbReference type="EC" id="3.4.23.36"/>
    </reaction>
</comment>
<comment type="pathway">
    <text evidence="1">Protein modification; lipoprotein biosynthesis (signal peptide cleavage).</text>
</comment>
<comment type="subcellular location">
    <subcellularLocation>
        <location evidence="1">Cell inner membrane</location>
        <topology evidence="1">Multi-pass membrane protein</topology>
    </subcellularLocation>
</comment>
<comment type="similarity">
    <text evidence="1">Belongs to the peptidase A8 family.</text>
</comment>
<accession>A4W6E2</accession>
<organism>
    <name type="scientific">Enterobacter sp. (strain 638)</name>
    <dbReference type="NCBI Taxonomy" id="399742"/>
    <lineage>
        <taxon>Bacteria</taxon>
        <taxon>Pseudomonadati</taxon>
        <taxon>Pseudomonadota</taxon>
        <taxon>Gammaproteobacteria</taxon>
        <taxon>Enterobacterales</taxon>
        <taxon>Enterobacteriaceae</taxon>
        <taxon>Enterobacter</taxon>
    </lineage>
</organism>
<reference key="1">
    <citation type="journal article" date="2010" name="PLoS Genet.">
        <title>Genome sequence of the plant growth promoting endophytic bacterium Enterobacter sp. 638.</title>
        <authorList>
            <person name="Taghavi S."/>
            <person name="van der Lelie D."/>
            <person name="Hoffman A."/>
            <person name="Zhang Y.B."/>
            <person name="Walla M.D."/>
            <person name="Vangronsveld J."/>
            <person name="Newman L."/>
            <person name="Monchy S."/>
        </authorList>
    </citation>
    <scope>NUCLEOTIDE SEQUENCE [LARGE SCALE GENOMIC DNA]</scope>
    <source>
        <strain>638</strain>
    </source>
</reference>
<protein>
    <recommendedName>
        <fullName evidence="1">Lipoprotein signal peptidase</fullName>
        <ecNumber evidence="1">3.4.23.36</ecNumber>
    </recommendedName>
    <alternativeName>
        <fullName evidence="1">Prolipoprotein signal peptidase</fullName>
    </alternativeName>
    <alternativeName>
        <fullName evidence="1">Signal peptidase II</fullName>
        <shortName evidence="1">SPase II</shortName>
    </alternativeName>
</protein>
<evidence type="ECO:0000255" key="1">
    <source>
        <dbReference type="HAMAP-Rule" id="MF_00161"/>
    </source>
</evidence>
<name>LSPA_ENT38</name>
<keyword id="KW-0064">Aspartyl protease</keyword>
<keyword id="KW-0997">Cell inner membrane</keyword>
<keyword id="KW-1003">Cell membrane</keyword>
<keyword id="KW-0378">Hydrolase</keyword>
<keyword id="KW-0472">Membrane</keyword>
<keyword id="KW-0645">Protease</keyword>
<keyword id="KW-0812">Transmembrane</keyword>
<keyword id="KW-1133">Transmembrane helix</keyword>
<dbReference type="EC" id="3.4.23.36" evidence="1"/>
<dbReference type="EMBL" id="CP000653">
    <property type="protein sequence ID" value="ABP59272.1"/>
    <property type="molecule type" value="Genomic_DNA"/>
</dbReference>
<dbReference type="RefSeq" id="WP_012015994.1">
    <property type="nucleotide sequence ID" value="NC_009436.1"/>
</dbReference>
<dbReference type="SMR" id="A4W6E2"/>
<dbReference type="STRING" id="399742.Ent638_0585"/>
<dbReference type="MEROPS" id="A08.001"/>
<dbReference type="KEGG" id="ent:Ent638_0585"/>
<dbReference type="eggNOG" id="COG0597">
    <property type="taxonomic scope" value="Bacteria"/>
</dbReference>
<dbReference type="HOGENOM" id="CLU_083252_4_0_6"/>
<dbReference type="OrthoDB" id="9810259at2"/>
<dbReference type="UniPathway" id="UPA00665"/>
<dbReference type="Proteomes" id="UP000000230">
    <property type="component" value="Chromosome"/>
</dbReference>
<dbReference type="GO" id="GO:0005886">
    <property type="term" value="C:plasma membrane"/>
    <property type="evidence" value="ECO:0007669"/>
    <property type="project" value="UniProtKB-SubCell"/>
</dbReference>
<dbReference type="GO" id="GO:0004190">
    <property type="term" value="F:aspartic-type endopeptidase activity"/>
    <property type="evidence" value="ECO:0007669"/>
    <property type="project" value="UniProtKB-UniRule"/>
</dbReference>
<dbReference type="GO" id="GO:0006508">
    <property type="term" value="P:proteolysis"/>
    <property type="evidence" value="ECO:0007669"/>
    <property type="project" value="UniProtKB-KW"/>
</dbReference>
<dbReference type="HAMAP" id="MF_00161">
    <property type="entry name" value="LspA"/>
    <property type="match status" value="1"/>
</dbReference>
<dbReference type="InterPro" id="IPR001872">
    <property type="entry name" value="Peptidase_A8"/>
</dbReference>
<dbReference type="NCBIfam" id="TIGR00077">
    <property type="entry name" value="lspA"/>
    <property type="match status" value="1"/>
</dbReference>
<dbReference type="PANTHER" id="PTHR33695">
    <property type="entry name" value="LIPOPROTEIN SIGNAL PEPTIDASE"/>
    <property type="match status" value="1"/>
</dbReference>
<dbReference type="PANTHER" id="PTHR33695:SF1">
    <property type="entry name" value="LIPOPROTEIN SIGNAL PEPTIDASE"/>
    <property type="match status" value="1"/>
</dbReference>
<dbReference type="Pfam" id="PF01252">
    <property type="entry name" value="Peptidase_A8"/>
    <property type="match status" value="1"/>
</dbReference>
<dbReference type="PRINTS" id="PR00781">
    <property type="entry name" value="LIPOSIGPTASE"/>
</dbReference>
<dbReference type="PROSITE" id="PS00855">
    <property type="entry name" value="SPASE_II"/>
    <property type="match status" value="1"/>
</dbReference>
<feature type="chain" id="PRO_1000058236" description="Lipoprotein signal peptidase">
    <location>
        <begin position="1"/>
        <end position="166"/>
    </location>
</feature>
<feature type="transmembrane region" description="Helical" evidence="1">
    <location>
        <begin position="12"/>
        <end position="32"/>
    </location>
</feature>
<feature type="transmembrane region" description="Helical" evidence="1">
    <location>
        <begin position="70"/>
        <end position="90"/>
    </location>
</feature>
<feature type="transmembrane region" description="Helical" evidence="1">
    <location>
        <begin position="102"/>
        <end position="122"/>
    </location>
</feature>
<feature type="transmembrane region" description="Helical" evidence="1">
    <location>
        <begin position="142"/>
        <end position="162"/>
    </location>
</feature>
<feature type="active site" evidence="1">
    <location>
        <position position="123"/>
    </location>
</feature>
<feature type="active site" evidence="1">
    <location>
        <position position="141"/>
    </location>
</feature>
<proteinExistence type="inferred from homology"/>
<gene>
    <name evidence="1" type="primary">lspA</name>
    <name type="ordered locus">Ent638_0585</name>
</gene>
<sequence>MTKSFCSTGLRWLWLVVVVLIIDLGSKFLILQNFALGDTVPLFPSLNLHYARNYGAAFSFLADSGGWQRWFFAGIALGICLVLTVMMYRAKASQKLNNIAYALIIGGALGNLFDRLWHGFVVDMIDFYVGNWHFATFNLADSAICFGAAMIVLEGFLPNAAAKKQA</sequence>